<feature type="chain" id="PRO_1000192792" description="Phosphoglycerate kinase">
    <location>
        <begin position="1"/>
        <end position="394"/>
    </location>
</feature>
<feature type="binding site" evidence="1">
    <location>
        <begin position="21"/>
        <end position="23"/>
    </location>
    <ligand>
        <name>substrate</name>
    </ligand>
</feature>
<feature type="binding site" evidence="1">
    <location>
        <position position="36"/>
    </location>
    <ligand>
        <name>substrate</name>
    </ligand>
</feature>
<feature type="binding site" evidence="1">
    <location>
        <begin position="59"/>
        <end position="62"/>
    </location>
    <ligand>
        <name>substrate</name>
    </ligand>
</feature>
<feature type="binding site" evidence="1">
    <location>
        <position position="118"/>
    </location>
    <ligand>
        <name>substrate</name>
    </ligand>
</feature>
<feature type="binding site" evidence="1">
    <location>
        <position position="151"/>
    </location>
    <ligand>
        <name>substrate</name>
    </ligand>
</feature>
<feature type="binding site" evidence="1">
    <location>
        <position position="201"/>
    </location>
    <ligand>
        <name>ATP</name>
        <dbReference type="ChEBI" id="CHEBI:30616"/>
    </ligand>
</feature>
<feature type="binding site" evidence="1">
    <location>
        <position position="292"/>
    </location>
    <ligand>
        <name>ATP</name>
        <dbReference type="ChEBI" id="CHEBI:30616"/>
    </ligand>
</feature>
<feature type="binding site" evidence="1">
    <location>
        <position position="323"/>
    </location>
    <ligand>
        <name>ATP</name>
        <dbReference type="ChEBI" id="CHEBI:30616"/>
    </ligand>
</feature>
<feature type="binding site" evidence="1">
    <location>
        <begin position="350"/>
        <end position="353"/>
    </location>
    <ligand>
        <name>ATP</name>
        <dbReference type="ChEBI" id="CHEBI:30616"/>
    </ligand>
</feature>
<feature type="modified residue" description="Phosphoserine" evidence="1">
    <location>
        <position position="183"/>
    </location>
</feature>
<feature type="modified residue" description="Phosphothreonine" evidence="1">
    <location>
        <position position="299"/>
    </location>
</feature>
<accession>B7GL27</accession>
<name>PGK_ANOFW</name>
<protein>
    <recommendedName>
        <fullName evidence="1">Phosphoglycerate kinase</fullName>
        <ecNumber evidence="1">2.7.2.3</ecNumber>
    </recommendedName>
</protein>
<organism>
    <name type="scientific">Anoxybacillus flavithermus (strain DSM 21510 / WK1)</name>
    <dbReference type="NCBI Taxonomy" id="491915"/>
    <lineage>
        <taxon>Bacteria</taxon>
        <taxon>Bacillati</taxon>
        <taxon>Bacillota</taxon>
        <taxon>Bacilli</taxon>
        <taxon>Bacillales</taxon>
        <taxon>Anoxybacillaceae</taxon>
        <taxon>Anoxybacillus</taxon>
    </lineage>
</organism>
<reference key="1">
    <citation type="journal article" date="2008" name="Genome Biol.">
        <title>Encapsulated in silica: genome, proteome and physiology of the thermophilic bacterium Anoxybacillus flavithermus WK1.</title>
        <authorList>
            <person name="Saw J.H."/>
            <person name="Mountain B.W."/>
            <person name="Feng L."/>
            <person name="Omelchenko M.V."/>
            <person name="Hou S."/>
            <person name="Saito J.A."/>
            <person name="Stott M.B."/>
            <person name="Li D."/>
            <person name="Zhao G."/>
            <person name="Wu J."/>
            <person name="Galperin M.Y."/>
            <person name="Koonin E.V."/>
            <person name="Makarova K.S."/>
            <person name="Wolf Y.I."/>
            <person name="Rigden D.J."/>
            <person name="Dunfield P.F."/>
            <person name="Wang L."/>
            <person name="Alam M."/>
        </authorList>
    </citation>
    <scope>NUCLEOTIDE SEQUENCE [LARGE SCALE GENOMIC DNA]</scope>
    <source>
        <strain>DSM 21510 / WK1</strain>
    </source>
</reference>
<proteinExistence type="inferred from homology"/>
<keyword id="KW-0067">ATP-binding</keyword>
<keyword id="KW-0963">Cytoplasm</keyword>
<keyword id="KW-0324">Glycolysis</keyword>
<keyword id="KW-0418">Kinase</keyword>
<keyword id="KW-0547">Nucleotide-binding</keyword>
<keyword id="KW-0597">Phosphoprotein</keyword>
<keyword id="KW-0808">Transferase</keyword>
<gene>
    <name evidence="1" type="primary">pgk</name>
    <name type="ordered locus">Aflv_2517</name>
</gene>
<comment type="catalytic activity">
    <reaction evidence="1">
        <text>(2R)-3-phosphoglycerate + ATP = (2R)-3-phospho-glyceroyl phosphate + ADP</text>
        <dbReference type="Rhea" id="RHEA:14801"/>
        <dbReference type="ChEBI" id="CHEBI:30616"/>
        <dbReference type="ChEBI" id="CHEBI:57604"/>
        <dbReference type="ChEBI" id="CHEBI:58272"/>
        <dbReference type="ChEBI" id="CHEBI:456216"/>
        <dbReference type="EC" id="2.7.2.3"/>
    </reaction>
</comment>
<comment type="pathway">
    <text evidence="1">Carbohydrate degradation; glycolysis; pyruvate from D-glyceraldehyde 3-phosphate: step 2/5.</text>
</comment>
<comment type="subunit">
    <text evidence="1">Monomer.</text>
</comment>
<comment type="subcellular location">
    <subcellularLocation>
        <location evidence="1">Cytoplasm</location>
    </subcellularLocation>
</comment>
<comment type="similarity">
    <text evidence="1">Belongs to the phosphoglycerate kinase family.</text>
</comment>
<evidence type="ECO:0000255" key="1">
    <source>
        <dbReference type="HAMAP-Rule" id="MF_00145"/>
    </source>
</evidence>
<dbReference type="EC" id="2.7.2.3" evidence="1"/>
<dbReference type="EMBL" id="CP000922">
    <property type="protein sequence ID" value="ACJ34872.1"/>
    <property type="molecule type" value="Genomic_DNA"/>
</dbReference>
<dbReference type="RefSeq" id="WP_012576012.1">
    <property type="nucleotide sequence ID" value="NC_011567.1"/>
</dbReference>
<dbReference type="SMR" id="B7GL27"/>
<dbReference type="STRING" id="491915.Aflv_2517"/>
<dbReference type="GeneID" id="7038790"/>
<dbReference type="KEGG" id="afl:Aflv_2517"/>
<dbReference type="PATRIC" id="fig|491915.6.peg.2593"/>
<dbReference type="eggNOG" id="COG0126">
    <property type="taxonomic scope" value="Bacteria"/>
</dbReference>
<dbReference type="HOGENOM" id="CLU_025427_0_2_9"/>
<dbReference type="UniPathway" id="UPA00109">
    <property type="reaction ID" value="UER00185"/>
</dbReference>
<dbReference type="Proteomes" id="UP000000742">
    <property type="component" value="Chromosome"/>
</dbReference>
<dbReference type="GO" id="GO:0005829">
    <property type="term" value="C:cytosol"/>
    <property type="evidence" value="ECO:0007669"/>
    <property type="project" value="TreeGrafter"/>
</dbReference>
<dbReference type="GO" id="GO:0043531">
    <property type="term" value="F:ADP binding"/>
    <property type="evidence" value="ECO:0007669"/>
    <property type="project" value="TreeGrafter"/>
</dbReference>
<dbReference type="GO" id="GO:0005524">
    <property type="term" value="F:ATP binding"/>
    <property type="evidence" value="ECO:0007669"/>
    <property type="project" value="UniProtKB-KW"/>
</dbReference>
<dbReference type="GO" id="GO:0004618">
    <property type="term" value="F:phosphoglycerate kinase activity"/>
    <property type="evidence" value="ECO:0007669"/>
    <property type="project" value="UniProtKB-UniRule"/>
</dbReference>
<dbReference type="GO" id="GO:0006094">
    <property type="term" value="P:gluconeogenesis"/>
    <property type="evidence" value="ECO:0007669"/>
    <property type="project" value="TreeGrafter"/>
</dbReference>
<dbReference type="GO" id="GO:0006096">
    <property type="term" value="P:glycolytic process"/>
    <property type="evidence" value="ECO:0007669"/>
    <property type="project" value="UniProtKB-UniRule"/>
</dbReference>
<dbReference type="CDD" id="cd00318">
    <property type="entry name" value="Phosphoglycerate_kinase"/>
    <property type="match status" value="1"/>
</dbReference>
<dbReference type="FunFam" id="3.40.50.1260:FF:000003">
    <property type="entry name" value="Phosphoglycerate kinase"/>
    <property type="match status" value="1"/>
</dbReference>
<dbReference type="FunFam" id="3.40.50.1260:FF:000006">
    <property type="entry name" value="Phosphoglycerate kinase"/>
    <property type="match status" value="1"/>
</dbReference>
<dbReference type="Gene3D" id="3.40.50.1260">
    <property type="entry name" value="Phosphoglycerate kinase, N-terminal domain"/>
    <property type="match status" value="2"/>
</dbReference>
<dbReference type="HAMAP" id="MF_00145">
    <property type="entry name" value="Phosphoglyc_kinase"/>
    <property type="match status" value="1"/>
</dbReference>
<dbReference type="InterPro" id="IPR001576">
    <property type="entry name" value="Phosphoglycerate_kinase"/>
</dbReference>
<dbReference type="InterPro" id="IPR015911">
    <property type="entry name" value="Phosphoglycerate_kinase_CS"/>
</dbReference>
<dbReference type="InterPro" id="IPR015824">
    <property type="entry name" value="Phosphoglycerate_kinase_N"/>
</dbReference>
<dbReference type="InterPro" id="IPR036043">
    <property type="entry name" value="Phosphoglycerate_kinase_sf"/>
</dbReference>
<dbReference type="PANTHER" id="PTHR11406">
    <property type="entry name" value="PHOSPHOGLYCERATE KINASE"/>
    <property type="match status" value="1"/>
</dbReference>
<dbReference type="PANTHER" id="PTHR11406:SF23">
    <property type="entry name" value="PHOSPHOGLYCERATE KINASE 1, CHLOROPLASTIC-RELATED"/>
    <property type="match status" value="1"/>
</dbReference>
<dbReference type="Pfam" id="PF00162">
    <property type="entry name" value="PGK"/>
    <property type="match status" value="1"/>
</dbReference>
<dbReference type="PIRSF" id="PIRSF000724">
    <property type="entry name" value="Pgk"/>
    <property type="match status" value="1"/>
</dbReference>
<dbReference type="PRINTS" id="PR00477">
    <property type="entry name" value="PHGLYCKINASE"/>
</dbReference>
<dbReference type="SUPFAM" id="SSF53748">
    <property type="entry name" value="Phosphoglycerate kinase"/>
    <property type="match status" value="1"/>
</dbReference>
<dbReference type="PROSITE" id="PS00111">
    <property type="entry name" value="PGLYCERATE_KINASE"/>
    <property type="match status" value="1"/>
</dbReference>
<sequence length="394" mass="42686">MNKKTVRDIDVKGKRVFCRVDFNVPMQNGVVTDDTRIRAALPTIQYLMEQGAKVILASHLGRPKGKVVEEMRLNAVAERLSELLGKRVVKTDEAYGDTVKAAIAEMNEGDVLLLENVRFYPGEEKNDPELAKAFAELADVYVNDAFGAAHRAHASTEGIAHHLPAVAGFLMEKEIEVLGKALSNPDRPFTAIIGGAKVKDKIGVIENLLDKVDNLIIGGGLAYTFVKALGHEIGKSLLEEDKIDLAKSFMEKAKEKGVNFYMPVDAVVADDFSNDANKKVVNIDEIPSDWEGLDIGPKTRELYRDVILKSKLVIWNGPMGVFEMDAFAEGTKAVAQALADAKDTYTVIGGGDSAAAVEKFGLANKMDHISTGGGASLEFMEGKQLPGVVALNDK</sequence>